<sequence length="72" mass="8372">MKQRITVTVDSDSYQLLKAYDVNISGLVSTTMQNEARRLRAERWKAENQEGMAEVARFIEMNGSFADENRDW</sequence>
<accession>P62553</accession>
<accession>P05702</accession>
<gene>
    <name type="primary">ccdA</name>
    <name type="synonym">H</name>
    <name type="synonym">letA</name>
    <name type="ordered locus">L7062</name>
    <name type="ordered locus">ECO57PM27</name>
</gene>
<name>CCDA_ECO57</name>
<reference key="1">
    <citation type="journal article" date="1998" name="Nucleic Acids Res.">
        <title>The complete DNA sequence and analysis of the large virulence plasmid of Escherichia coli O157:H7.</title>
        <authorList>
            <person name="Burland V."/>
            <person name="Shao Y."/>
            <person name="Perna N.T."/>
            <person name="Plunkett G. III"/>
            <person name="Sofia H.J."/>
            <person name="Blattner F.R."/>
        </authorList>
    </citation>
    <scope>NUCLEOTIDE SEQUENCE [LARGE SCALE GENOMIC DNA]</scope>
    <source>
        <strain>O157:H7 / EDL933 / ATCC 700927 / EHEC</strain>
    </source>
</reference>
<reference key="2">
    <citation type="journal article" date="1998" name="DNA Res.">
        <title>Complete nucleotide sequences of 93-kb and 3.3-kb plasmids of an enterohemorrhagic Escherichia coli O157:H7 derived from Sakai outbreak.</title>
        <authorList>
            <person name="Makino K."/>
            <person name="Ishii K."/>
            <person name="Yasunaga T."/>
            <person name="Hattori M."/>
            <person name="Yokoyama K."/>
            <person name="Yatsudo H.C."/>
            <person name="Kubota Y."/>
            <person name="Yamaichi Y."/>
            <person name="Iida T."/>
            <person name="Yamamoto K."/>
            <person name="Honda T."/>
            <person name="Han C.G."/>
            <person name="Ohtsubo A."/>
            <person name="Kasamatsu M."/>
            <person name="Hayashi T."/>
            <person name="Kuhara S."/>
            <person name="Shinagawa H."/>
        </authorList>
    </citation>
    <scope>NUCLEOTIDE SEQUENCE [LARGE SCALE GENOMIC DNA]</scope>
    <source>
        <strain>O157:H7 / Sakai / RIMD 0509952 / EHEC</strain>
    </source>
</reference>
<dbReference type="EMBL" id="AF074613">
    <property type="protein sequence ID" value="AAC70130.1"/>
    <property type="molecule type" value="Genomic_DNA"/>
</dbReference>
<dbReference type="EMBL" id="AB011549">
    <property type="protein sequence ID" value="BAA31784.1"/>
    <property type="molecule type" value="Genomic_DNA"/>
</dbReference>
<dbReference type="RefSeq" id="NP_052634.1">
    <property type="nucleotide sequence ID" value="NC_002128.1"/>
</dbReference>
<dbReference type="RefSeq" id="WP_000813634.1">
    <property type="nucleotide sequence ID" value="NZ_VOAI01000036.1"/>
</dbReference>
<dbReference type="PDB" id="3TCJ">
    <property type="method" value="X-ray"/>
    <property type="resolution" value="1.93 A"/>
    <property type="chains" value="T=37-72"/>
</dbReference>
<dbReference type="PDBsum" id="3TCJ"/>
<dbReference type="SMR" id="P62553"/>
<dbReference type="GeneID" id="1789714"/>
<dbReference type="GeneID" id="75174184"/>
<dbReference type="KEGG" id="ece:Z_L7062"/>
<dbReference type="KEGG" id="ecs:pO157p28"/>
<dbReference type="PATRIC" id="fig|386585.9.peg.31"/>
<dbReference type="eggNOG" id="COG5302">
    <property type="taxonomic scope" value="Bacteria"/>
</dbReference>
<dbReference type="HOGENOM" id="CLU_157097_1_0_6"/>
<dbReference type="OMA" id="HHNNIYL"/>
<dbReference type="EvolutionaryTrace" id="P62553"/>
<dbReference type="Proteomes" id="UP000000558">
    <property type="component" value="Plasmid pO157"/>
</dbReference>
<dbReference type="Proteomes" id="UP000002519">
    <property type="component" value="Plasmid pO157"/>
</dbReference>
<dbReference type="GO" id="GO:0003677">
    <property type="term" value="F:DNA binding"/>
    <property type="evidence" value="ECO:0007669"/>
    <property type="project" value="UniProtKB-KW"/>
</dbReference>
<dbReference type="Gene3D" id="1.10.1220.80">
    <property type="match status" value="1"/>
</dbReference>
<dbReference type="InterPro" id="IPR009956">
    <property type="entry name" value="Post-segregation_anti-tox_CcdA"/>
</dbReference>
<dbReference type="NCBIfam" id="NF010264">
    <property type="entry name" value="PRK13710.1"/>
    <property type="match status" value="1"/>
</dbReference>
<dbReference type="Pfam" id="PF07362">
    <property type="entry name" value="CcdA"/>
    <property type="match status" value="1"/>
</dbReference>
<protein>
    <recommendedName>
        <fullName>Antitoxin CcdA</fullName>
    </recommendedName>
    <alternativeName>
        <fullName>LynA</fullName>
    </alternativeName>
    <alternativeName>
        <fullName>Protein H</fullName>
    </alternativeName>
    <alternativeName>
        <fullName>Protein LetA</fullName>
    </alternativeName>
</protein>
<feature type="chain" id="PRO_0000068384" description="Antitoxin CcdA">
    <location>
        <begin position="1"/>
        <end position="72"/>
    </location>
</feature>
<feature type="helix" evidence="3">
    <location>
        <begin position="41"/>
        <end position="47"/>
    </location>
</feature>
<feature type="helix" evidence="3">
    <location>
        <begin position="49"/>
        <end position="62"/>
    </location>
</feature>
<feature type="helix" evidence="3">
    <location>
        <begin position="65"/>
        <end position="69"/>
    </location>
</feature>
<evidence type="ECO:0000250" key="1"/>
<evidence type="ECO:0000305" key="2"/>
<evidence type="ECO:0007829" key="3">
    <source>
        <dbReference type="PDB" id="3TCJ"/>
    </source>
</evidence>
<keyword id="KW-0002">3D-structure</keyword>
<keyword id="KW-0238">DNA-binding</keyword>
<keyword id="KW-0614">Plasmid</keyword>
<keyword id="KW-1185">Reference proteome</keyword>
<keyword id="KW-0678">Repressor</keyword>
<keyword id="KW-1277">Toxin-antitoxin system</keyword>
<keyword id="KW-0804">Transcription</keyword>
<keyword id="KW-0805">Transcription regulation</keyword>
<comment type="function">
    <text evidence="1">Antitoxin component of a type II toxin-antitoxin (TA) system which inhibits the post-segregational killing (PSK) of plasmid-free cells, also referred to as a plasmid addiction system. Binds to and blocks the activity of CcdB; will also remove bound CcdB protein from the CcdB-GyrA complex by forming a CcdA-CcdB complex, a process termed rejuvenation. Functions as a transcriptional corepressor for the ccdAB operon, repression also requires CcdB (By similarity).</text>
</comment>
<comment type="subunit">
    <text evidence="1">Homodimer in solution and when bound to DNA. Forms a complex with toxin CcdB; the CcdA-CcdB(2) trimer is sufficient for rejuvenation, whereas maximal operon repression occurs with CcdA(2)CcdB(2) (By similarity).</text>
</comment>
<comment type="similarity">
    <text evidence="2">Belongs to the CcdA antitoxin family.</text>
</comment>
<proteinExistence type="evidence at protein level"/>
<organism>
    <name type="scientific">Escherichia coli O157:H7</name>
    <dbReference type="NCBI Taxonomy" id="83334"/>
    <lineage>
        <taxon>Bacteria</taxon>
        <taxon>Pseudomonadati</taxon>
        <taxon>Pseudomonadota</taxon>
        <taxon>Gammaproteobacteria</taxon>
        <taxon>Enterobacterales</taxon>
        <taxon>Enterobacteriaceae</taxon>
        <taxon>Escherichia</taxon>
    </lineage>
</organism>
<geneLocation type="plasmid">
    <name>pO157</name>
</geneLocation>